<reference key="1">
    <citation type="journal article" date="1995" name="Gene">
        <title>The monkey ESP14.6 mRNA, a novel transcript expressed at high levels in the epididymis.</title>
        <authorList>
            <person name="Perry A.C.F."/>
            <person name="Jones R."/>
            <person name="Hall L."/>
        </authorList>
    </citation>
    <scope>NUCLEOTIDE SEQUENCE [MRNA]</scope>
    <source>
        <tissue>Epididymis</tissue>
    </source>
</reference>
<reference key="2">
    <citation type="submission" date="2005-06" db="EMBL/GenBank/DDBJ databases">
        <title>DNA sequences of macaque genes expressed in brain or testis and its evolutionary implications.</title>
        <authorList>
            <consortium name="International consortium for macaque cDNA sequencing and analysis"/>
        </authorList>
    </citation>
    <scope>NUCLEOTIDE SEQUENCE [LARGE SCALE MRNA]</scope>
    <source>
        <tissue>Testis</tissue>
    </source>
</reference>
<protein>
    <recommendedName>
        <fullName evidence="1">NPC intracellular cholesterol transporter 2</fullName>
    </recommendedName>
    <alternativeName>
        <fullName evidence="6">Epididymal secretory protein 14.6</fullName>
        <shortName evidence="6">ESP14.6</shortName>
    </alternativeName>
    <alternativeName>
        <fullName>Epididymal secretory protein E1</fullName>
    </alternativeName>
    <alternativeName>
        <fullName>Niemann Pick type C2 protein homolog</fullName>
    </alternativeName>
</protein>
<accession>P61918</accession>
<accession>Q15668</accession>
<accession>Q29413</accession>
<accession>Q4R3F4</accession>
<evidence type="ECO:0000250" key="1">
    <source>
        <dbReference type="UniProtKB" id="P61916"/>
    </source>
</evidence>
<evidence type="ECO:0000250" key="2">
    <source>
        <dbReference type="UniProtKB" id="P79345"/>
    </source>
</evidence>
<evidence type="ECO:0000250" key="3">
    <source>
        <dbReference type="UniProtKB" id="Q9Z0J0"/>
    </source>
</evidence>
<evidence type="ECO:0000255" key="4"/>
<evidence type="ECO:0000269" key="5">
    <source>
    </source>
</evidence>
<evidence type="ECO:0000303" key="6">
    <source>
    </source>
</evidence>
<evidence type="ECO:0000305" key="7"/>
<proteinExistence type="evidence at transcript level"/>
<keyword id="KW-0007">Acetylation</keyword>
<keyword id="KW-0153">Cholesterol metabolism</keyword>
<keyword id="KW-1015">Disulfide bond</keyword>
<keyword id="KW-0256">Endoplasmic reticulum</keyword>
<keyword id="KW-0325">Glycoprotein</keyword>
<keyword id="KW-0443">Lipid metabolism</keyword>
<keyword id="KW-0445">Lipid transport</keyword>
<keyword id="KW-0458">Lysosome</keyword>
<keyword id="KW-1185">Reference proteome</keyword>
<keyword id="KW-0964">Secreted</keyword>
<keyword id="KW-0732">Signal</keyword>
<keyword id="KW-0753">Steroid metabolism</keyword>
<keyword id="KW-1207">Sterol metabolism</keyword>
<keyword id="KW-0813">Transport</keyword>
<name>NPC2_MACFA</name>
<comment type="function">
    <text evidence="1 3">Intracellular cholesterol transporter which acts in concert with NPC1 and plays an important role in the egress of cholesterol from the lysosomal compartment. Unesterified cholesterol that has been released from LDLs in the lumen of the late endosomes/lysosomes is transferred by NPC2 to the cholesterol-binding pocket in the N-terminal domain of NPC1. May bind and mobilize cholesterol that is associated with membranes. NPC2 binds cholesterol with a 1:1 stoichiometry. Can bind a variety of sterols, including lathosterol, desmosterol and the plant sterols stigmasterol and beta-sitosterol (By similarity). The secreted form of NCP2 regulates biliary cholesterol secretion via stimulation of ABCG5/ABCG8-mediated cholesterol transport (By similarity).</text>
</comment>
<comment type="catalytic activity">
    <reaction evidence="2">
        <text>cholesterol(in) = cholesterol(out)</text>
        <dbReference type="Rhea" id="RHEA:39747"/>
        <dbReference type="ChEBI" id="CHEBI:16113"/>
    </reaction>
</comment>
<comment type="subunit">
    <text evidence="1">Interacts with NPC1 (via the second lumenal domain) in a cholestrol-dependent manner. Interacts with NUS1/NgBR, the interaction stabilizes NCP2 and regulates cholesterol trafficking. Interacts with DHDDS. Interacts with NEDD4L (via C2 domain). Interacts with NPC1L1.</text>
</comment>
<comment type="subcellular location">
    <subcellularLocation>
        <location evidence="1">Secreted</location>
    </subcellularLocation>
    <subcellularLocation>
        <location evidence="1">Endoplasmic reticulum</location>
    </subcellularLocation>
    <subcellularLocation>
        <location evidence="1">Lysosome</location>
    </subcellularLocation>
    <text evidence="1">Interaction with cell-surface M6PR mediates endocytosis and targeting to lysosomes.</text>
</comment>
<comment type="tissue specificity">
    <text evidence="5">Detected in epididymis.</text>
</comment>
<comment type="domain">
    <text evidence="2">Binds cholesterol in a hydrophobic pocket; there are no hydrogen bonds between the sterol and the protein.</text>
</comment>
<comment type="similarity">
    <text evidence="7">Belongs to the NPC2 family.</text>
</comment>
<organism>
    <name type="scientific">Macaca fascicularis</name>
    <name type="common">Crab-eating macaque</name>
    <name type="synonym">Cynomolgus monkey</name>
    <dbReference type="NCBI Taxonomy" id="9541"/>
    <lineage>
        <taxon>Eukaryota</taxon>
        <taxon>Metazoa</taxon>
        <taxon>Chordata</taxon>
        <taxon>Craniata</taxon>
        <taxon>Vertebrata</taxon>
        <taxon>Euteleostomi</taxon>
        <taxon>Mammalia</taxon>
        <taxon>Eutheria</taxon>
        <taxon>Euarchontoglires</taxon>
        <taxon>Primates</taxon>
        <taxon>Haplorrhini</taxon>
        <taxon>Catarrhini</taxon>
        <taxon>Cercopithecidae</taxon>
        <taxon>Cercopithecinae</taxon>
        <taxon>Macaca</taxon>
    </lineage>
</organism>
<dbReference type="EMBL" id="X78134">
    <property type="protein sequence ID" value="CAA55013.1"/>
    <property type="molecule type" value="mRNA"/>
</dbReference>
<dbReference type="EMBL" id="AB179312">
    <property type="protein sequence ID" value="BAE02363.1"/>
    <property type="molecule type" value="mRNA"/>
</dbReference>
<dbReference type="PIR" id="I53929">
    <property type="entry name" value="I53929"/>
</dbReference>
<dbReference type="RefSeq" id="XP_005561827.1">
    <property type="nucleotide sequence ID" value="XM_005561770.4"/>
</dbReference>
<dbReference type="SMR" id="P61918"/>
<dbReference type="STRING" id="9541.ENSMFAP00000021649"/>
<dbReference type="GlyCosmos" id="P61918">
    <property type="glycosylation" value="2 sites, No reported glycans"/>
</dbReference>
<dbReference type="Ensembl" id="ENSMFAT00000034352.2">
    <property type="protein sequence ID" value="ENSMFAP00000021665.1"/>
    <property type="gene ID" value="ENSMFAG00000035734.2"/>
</dbReference>
<dbReference type="GeneID" id="101865784"/>
<dbReference type="KEGG" id="mcf:101865784"/>
<dbReference type="CTD" id="10577"/>
<dbReference type="VEuPathDB" id="HostDB:ENSMFAG00000035734"/>
<dbReference type="eggNOG" id="KOG4063">
    <property type="taxonomic scope" value="Eukaryota"/>
</dbReference>
<dbReference type="GeneTree" id="ENSGT00390000006223"/>
<dbReference type="OMA" id="QNLFCWE"/>
<dbReference type="Proteomes" id="UP000233100">
    <property type="component" value="Chromosome 7"/>
</dbReference>
<dbReference type="Bgee" id="ENSMFAG00000035734">
    <property type="expression patterns" value="Expressed in lung and 13 other cell types or tissues"/>
</dbReference>
<dbReference type="GO" id="GO:0005783">
    <property type="term" value="C:endoplasmic reticulum"/>
    <property type="evidence" value="ECO:0007669"/>
    <property type="project" value="UniProtKB-SubCell"/>
</dbReference>
<dbReference type="GO" id="GO:0005576">
    <property type="term" value="C:extracellular region"/>
    <property type="evidence" value="ECO:0007669"/>
    <property type="project" value="UniProtKB-SubCell"/>
</dbReference>
<dbReference type="GO" id="GO:0005764">
    <property type="term" value="C:lysosome"/>
    <property type="evidence" value="ECO:0007669"/>
    <property type="project" value="UniProtKB-SubCell"/>
</dbReference>
<dbReference type="GO" id="GO:0015485">
    <property type="term" value="F:cholesterol binding"/>
    <property type="evidence" value="ECO:0000250"/>
    <property type="project" value="UniProtKB"/>
</dbReference>
<dbReference type="GO" id="GO:0033344">
    <property type="term" value="P:cholesterol efflux"/>
    <property type="evidence" value="ECO:0000250"/>
    <property type="project" value="UniProtKB"/>
</dbReference>
<dbReference type="GO" id="GO:0008203">
    <property type="term" value="P:cholesterol metabolic process"/>
    <property type="evidence" value="ECO:0007669"/>
    <property type="project" value="UniProtKB-KW"/>
</dbReference>
<dbReference type="GO" id="GO:0030301">
    <property type="term" value="P:cholesterol transport"/>
    <property type="evidence" value="ECO:0000250"/>
    <property type="project" value="UniProtKB"/>
</dbReference>
<dbReference type="GO" id="GO:0032367">
    <property type="term" value="P:intracellular cholesterol transport"/>
    <property type="evidence" value="ECO:0000250"/>
    <property type="project" value="UniProtKB"/>
</dbReference>
<dbReference type="CDD" id="cd00916">
    <property type="entry name" value="Npc2_like"/>
    <property type="match status" value="1"/>
</dbReference>
<dbReference type="FunFam" id="2.60.40.770:FF:000001">
    <property type="entry name" value="NPC intracellular cholesterol transporter 2"/>
    <property type="match status" value="1"/>
</dbReference>
<dbReference type="Gene3D" id="2.60.40.770">
    <property type="match status" value="1"/>
</dbReference>
<dbReference type="InterPro" id="IPR014756">
    <property type="entry name" value="Ig_E-set"/>
</dbReference>
<dbReference type="InterPro" id="IPR003172">
    <property type="entry name" value="ML_dom"/>
</dbReference>
<dbReference type="InterPro" id="IPR033916">
    <property type="entry name" value="ML_Npc2-like"/>
</dbReference>
<dbReference type="InterPro" id="IPR039670">
    <property type="entry name" value="NPC2-like"/>
</dbReference>
<dbReference type="PANTHER" id="PTHR11306">
    <property type="entry name" value="NIEMANN PICK TYPE C2 PROTEIN NPC2-RELATED"/>
    <property type="match status" value="1"/>
</dbReference>
<dbReference type="PANTHER" id="PTHR11306:SF68">
    <property type="entry name" value="NPC INTRACELLULAR CHOLESTEROL TRANSPORTER 2"/>
    <property type="match status" value="1"/>
</dbReference>
<dbReference type="Pfam" id="PF02221">
    <property type="entry name" value="E1_DerP2_DerF2"/>
    <property type="match status" value="1"/>
</dbReference>
<dbReference type="SMART" id="SM00737">
    <property type="entry name" value="ML"/>
    <property type="match status" value="1"/>
</dbReference>
<dbReference type="SUPFAM" id="SSF81296">
    <property type="entry name" value="E set domains"/>
    <property type="match status" value="1"/>
</dbReference>
<feature type="signal peptide" evidence="4">
    <location>
        <begin position="1"/>
        <end position="19"/>
    </location>
</feature>
<feature type="chain" id="PRO_0000019855" description="NPC intracellular cholesterol transporter 2">
    <location>
        <begin position="20"/>
        <end position="151"/>
    </location>
</feature>
<feature type="modified residue" description="N6-acetyllysine" evidence="3">
    <location>
        <position position="116"/>
    </location>
</feature>
<feature type="glycosylation site" description="N-linked (GlcNAc...) asparagine" evidence="4">
    <location>
        <position position="58"/>
    </location>
</feature>
<feature type="glycosylation site" description="N-linked (GlcNAc...) asparagine" evidence="4">
    <location>
        <position position="135"/>
    </location>
</feature>
<feature type="disulfide bond" evidence="1">
    <location>
        <begin position="27"/>
        <end position="140"/>
    </location>
</feature>
<feature type="disulfide bond" evidence="1">
    <location>
        <begin position="42"/>
        <end position="47"/>
    </location>
</feature>
<feature type="disulfide bond" evidence="1">
    <location>
        <begin position="93"/>
        <end position="99"/>
    </location>
</feature>
<sequence>MRFLAATFLLLALSTAAQAEPVQFKDCGSVDGVIKEVNVSPCPTQPCQLSKGQSYSVNVTFTSNIQSKSSKAVVHGILMGVPVPFPIPEPDGCKSGINCPIQKDKTYSYLNKLPVKSEYPSIKLVVEWQLQDDKNQSLFCWEIPVQIVSHL</sequence>
<gene>
    <name evidence="1" type="primary">NPC2</name>
    <name type="ORF">QtsA-17309</name>
</gene>